<name>ADAT3_RAT</name>
<protein>
    <recommendedName>
        <fullName>Probable inactive tRNA-specific adenosine deaminase-like protein 3</fullName>
    </recommendedName>
    <alternativeName>
        <fullName>tRNA-specific adenosine-34 deaminase subunit ADAT3</fullName>
    </alternativeName>
</protein>
<sequence>MEPTSGFAEQPGPEKVESEEQEPAQWQALPVLSEQQSGAVELVLAYAAPVLDKRQTSRLLREVSAVYPLPAQPHLKRVRPSRSAGGAHSSDLLLCLAGPSAGPRSLAELLPRPAVDPRGLGTPFLVPVPARPPLTRSQFEEARAHWPTSFHEDKQVTSALAGQLFSAQARAAMQTHMERAVRAAQRAAAQGLRAVGAVVVDPASDHVLATGHDCCSEASPLLHAVMVCIDLVAQGQGRGSCDLRRHPACSFTQATATQSARAGSVRKLDEDSLPYVCTGYDLYVTREPCVMCAMALVHARIQRVFYGAPSPDGALGTRFRVHARPDLNHRFQVFRGILEDQCRQLDPDP</sequence>
<dbReference type="EMBL" id="BC093394">
    <property type="protein sequence ID" value="AAH93394.1"/>
    <property type="molecule type" value="mRNA"/>
</dbReference>
<dbReference type="RefSeq" id="NP_001096831.1">
    <property type="nucleotide sequence ID" value="NM_001103361.1"/>
</dbReference>
<dbReference type="RefSeq" id="XP_017450047.1">
    <property type="nucleotide sequence ID" value="XM_017594558.1"/>
</dbReference>
<dbReference type="SMR" id="Q561R2"/>
<dbReference type="FunCoup" id="Q561R2">
    <property type="interactions" value="771"/>
</dbReference>
<dbReference type="PhosphoSitePlus" id="Q561R2"/>
<dbReference type="Ensembl" id="ENSRNOT00000095368.1">
    <property type="protein sequence ID" value="ENSRNOP00000089590.1"/>
    <property type="gene ID" value="ENSRNOG00000063591.1"/>
</dbReference>
<dbReference type="GeneID" id="100125374"/>
<dbReference type="KEGG" id="rno:100125374"/>
<dbReference type="UCSC" id="RGD:1642417">
    <property type="organism name" value="rat"/>
</dbReference>
<dbReference type="AGR" id="RGD:1642417"/>
<dbReference type="CTD" id="113179"/>
<dbReference type="RGD" id="1642417">
    <property type="gene designation" value="Adat3"/>
</dbReference>
<dbReference type="GeneTree" id="ENSGT00390000010706"/>
<dbReference type="InParanoid" id="Q561R2"/>
<dbReference type="OMA" id="QHWPTSF"/>
<dbReference type="OrthoDB" id="63217at9989"/>
<dbReference type="PhylomeDB" id="Q561R2"/>
<dbReference type="PRO" id="PR:Q561R2"/>
<dbReference type="Proteomes" id="UP000002494">
    <property type="component" value="Chromosome 7"/>
</dbReference>
<dbReference type="GO" id="GO:0005737">
    <property type="term" value="C:cytoplasm"/>
    <property type="evidence" value="ECO:0000318"/>
    <property type="project" value="GO_Central"/>
</dbReference>
<dbReference type="GO" id="GO:0005634">
    <property type="term" value="C:nucleus"/>
    <property type="evidence" value="ECO:0000318"/>
    <property type="project" value="GO_Central"/>
</dbReference>
<dbReference type="GO" id="GO:0003824">
    <property type="term" value="F:catalytic activity"/>
    <property type="evidence" value="ECO:0007669"/>
    <property type="project" value="InterPro"/>
</dbReference>
<dbReference type="GO" id="GO:0046872">
    <property type="term" value="F:metal ion binding"/>
    <property type="evidence" value="ECO:0007669"/>
    <property type="project" value="UniProtKB-KW"/>
</dbReference>
<dbReference type="GO" id="GO:0008033">
    <property type="term" value="P:tRNA processing"/>
    <property type="evidence" value="ECO:0007669"/>
    <property type="project" value="UniProtKB-KW"/>
</dbReference>
<dbReference type="CDD" id="cd01285">
    <property type="entry name" value="nucleoside_deaminase"/>
    <property type="match status" value="1"/>
</dbReference>
<dbReference type="Gene3D" id="3.40.140.10">
    <property type="entry name" value="Cytidine Deaminase, domain 2"/>
    <property type="match status" value="1"/>
</dbReference>
<dbReference type="InterPro" id="IPR002125">
    <property type="entry name" value="CMP_dCMP_dom"/>
</dbReference>
<dbReference type="InterPro" id="IPR016193">
    <property type="entry name" value="Cytidine_deaminase-like"/>
</dbReference>
<dbReference type="PANTHER" id="PTHR11079">
    <property type="entry name" value="CYTOSINE DEAMINASE FAMILY MEMBER"/>
    <property type="match status" value="1"/>
</dbReference>
<dbReference type="PANTHER" id="PTHR11079:SF156">
    <property type="entry name" value="INACTIVE TRNA-SPECIFIC ADENOSINE DEAMINASE-LIKE PROTEIN 3-RELATED"/>
    <property type="match status" value="1"/>
</dbReference>
<dbReference type="Pfam" id="PF00383">
    <property type="entry name" value="dCMP_cyt_deam_1"/>
    <property type="match status" value="1"/>
</dbReference>
<dbReference type="SUPFAM" id="SSF53927">
    <property type="entry name" value="Cytidine deaminase-like"/>
    <property type="match status" value="1"/>
</dbReference>
<dbReference type="PROSITE" id="PS51747">
    <property type="entry name" value="CYT_DCMP_DEAMINASES_2"/>
    <property type="match status" value="1"/>
</dbReference>
<reference key="1">
    <citation type="journal article" date="2004" name="Genome Res.">
        <title>The status, quality, and expansion of the NIH full-length cDNA project: the Mammalian Gene Collection (MGC).</title>
        <authorList>
            <consortium name="The MGC Project Team"/>
        </authorList>
    </citation>
    <scope>NUCLEOTIDE SEQUENCE [LARGE SCALE MRNA]</scope>
    <source>
        <tissue>Thymus</tissue>
    </source>
</reference>
<feature type="chain" id="PRO_0000287660" description="Probable inactive tRNA-specific adenosine deaminase-like protein 3">
    <location>
        <begin position="1"/>
        <end position="349"/>
    </location>
</feature>
<feature type="domain" description="CMP/dCMP-type deaminase" evidence="3">
    <location>
        <begin position="171"/>
        <end position="334"/>
    </location>
</feature>
<feature type="region of interest" description="Disordered" evidence="4">
    <location>
        <begin position="1"/>
        <end position="25"/>
    </location>
</feature>
<feature type="binding site" evidence="1">
    <location>
        <position position="223"/>
    </location>
    <ligand>
        <name>Zn(2+)</name>
        <dbReference type="ChEBI" id="CHEBI:29105"/>
    </ligand>
</feature>
<feature type="binding site" evidence="1">
    <location>
        <position position="289"/>
    </location>
    <ligand>
        <name>Zn(2+)</name>
        <dbReference type="ChEBI" id="CHEBI:29105"/>
    </ligand>
</feature>
<feature type="binding site" evidence="1">
    <location>
        <position position="292"/>
    </location>
    <ligand>
        <name>Zn(2+)</name>
        <dbReference type="ChEBI" id="CHEBI:29105"/>
    </ligand>
</feature>
<feature type="modified residue" description="N-acetylmethionine" evidence="2">
    <location>
        <position position="1"/>
    </location>
</feature>
<gene>
    <name type="primary">Adat3</name>
</gene>
<keyword id="KW-0007">Acetylation</keyword>
<keyword id="KW-0479">Metal-binding</keyword>
<keyword id="KW-1185">Reference proteome</keyword>
<keyword id="KW-0819">tRNA processing</keyword>
<keyword id="KW-0862">Zinc</keyword>
<proteinExistence type="evidence at transcript level"/>
<organism>
    <name type="scientific">Rattus norvegicus</name>
    <name type="common">Rat</name>
    <dbReference type="NCBI Taxonomy" id="10116"/>
    <lineage>
        <taxon>Eukaryota</taxon>
        <taxon>Metazoa</taxon>
        <taxon>Chordata</taxon>
        <taxon>Craniata</taxon>
        <taxon>Vertebrata</taxon>
        <taxon>Euteleostomi</taxon>
        <taxon>Mammalia</taxon>
        <taxon>Eutheria</taxon>
        <taxon>Euarchontoglires</taxon>
        <taxon>Glires</taxon>
        <taxon>Rodentia</taxon>
        <taxon>Myomorpha</taxon>
        <taxon>Muroidea</taxon>
        <taxon>Muridae</taxon>
        <taxon>Murinae</taxon>
        <taxon>Rattus</taxon>
    </lineage>
</organism>
<accession>Q561R2</accession>
<comment type="cofactor">
    <cofactor evidence="1">
        <name>Zn(2+)</name>
        <dbReference type="ChEBI" id="CHEBI:29105"/>
    </cofactor>
</comment>
<comment type="similarity">
    <text evidence="5">Belongs to the cytidine and deoxycytidylate deaminase family. ADAT3 subfamily.</text>
</comment>
<comment type="caution">
    <text evidence="5">Val-225 is present instead of the conserved Glu which is an active site in the cytidine and deoxycytidylate deaminase family of enzymes. It is suggested that this protein may act as a regulatory subunit.</text>
</comment>
<evidence type="ECO:0000250" key="1"/>
<evidence type="ECO:0000250" key="2">
    <source>
        <dbReference type="UniProtKB" id="Q96EY9"/>
    </source>
</evidence>
<evidence type="ECO:0000255" key="3">
    <source>
        <dbReference type="PROSITE-ProRule" id="PRU01083"/>
    </source>
</evidence>
<evidence type="ECO:0000256" key="4">
    <source>
        <dbReference type="SAM" id="MobiDB-lite"/>
    </source>
</evidence>
<evidence type="ECO:0000305" key="5"/>